<dbReference type="EMBL" id="BC151197">
    <property type="protein sequence ID" value="AAI51198.1"/>
    <property type="molecule type" value="mRNA"/>
</dbReference>
<dbReference type="EMBL" id="AC124584">
    <property type="status" value="NOT_ANNOTATED_CDS"/>
    <property type="molecule type" value="Genomic_DNA"/>
</dbReference>
<dbReference type="CCDS" id="CCDS40457.1"/>
<dbReference type="RefSeq" id="NP_001074801.1">
    <property type="nucleotide sequence ID" value="NM_001081332.2"/>
</dbReference>
<dbReference type="SMR" id="B2RXE2"/>
<dbReference type="FunCoup" id="B2RXE2">
    <property type="interactions" value="150"/>
</dbReference>
<dbReference type="STRING" id="10090.ENSMUSP00000072893"/>
<dbReference type="GlyGen" id="B2RXE2">
    <property type="glycosylation" value="1 site"/>
</dbReference>
<dbReference type="iPTMnet" id="B2RXE2"/>
<dbReference type="PhosphoSitePlus" id="B2RXE2"/>
<dbReference type="PaxDb" id="10090-ENSMUSP00000072893"/>
<dbReference type="PRIDE" id="B2RXE2"/>
<dbReference type="ProteomicsDB" id="334798"/>
<dbReference type="Antibodypedia" id="44267">
    <property type="antibodies" value="65 antibodies from 20 providers"/>
</dbReference>
<dbReference type="Ensembl" id="ENSMUST00000073149.7">
    <property type="protein sequence ID" value="ENSMUSP00000072893.6"/>
    <property type="gene ID" value="ENSMUSG00000014786.9"/>
</dbReference>
<dbReference type="GeneID" id="277973"/>
<dbReference type="KEGG" id="mmu:277973"/>
<dbReference type="UCSC" id="uc009ncu.1">
    <property type="organism name" value="mouse"/>
</dbReference>
<dbReference type="AGR" id="MGI:2685542"/>
<dbReference type="CTD" id="6553"/>
<dbReference type="MGI" id="MGI:2685542">
    <property type="gene designation" value="Slc9a5"/>
</dbReference>
<dbReference type="VEuPathDB" id="HostDB:ENSMUSG00000014786"/>
<dbReference type="eggNOG" id="KOG1966">
    <property type="taxonomic scope" value="Eukaryota"/>
</dbReference>
<dbReference type="GeneTree" id="ENSGT00940000159190"/>
<dbReference type="HOGENOM" id="CLU_005912_4_2_1"/>
<dbReference type="InParanoid" id="B2RXE2"/>
<dbReference type="OMA" id="AMHHLLC"/>
<dbReference type="OrthoDB" id="196264at2759"/>
<dbReference type="TreeFam" id="TF317212"/>
<dbReference type="Reactome" id="R-MMU-425986">
    <property type="pathway name" value="Sodium/Proton exchangers"/>
</dbReference>
<dbReference type="BioGRID-ORCS" id="277973">
    <property type="hits" value="2 hits in 81 CRISPR screens"/>
</dbReference>
<dbReference type="ChiTaRS" id="Slc9a5">
    <property type="organism name" value="mouse"/>
</dbReference>
<dbReference type="PRO" id="PR:B2RXE2"/>
<dbReference type="Proteomes" id="UP000000589">
    <property type="component" value="Chromosome 8"/>
</dbReference>
<dbReference type="RNAct" id="B2RXE2">
    <property type="molecule type" value="protein"/>
</dbReference>
<dbReference type="Bgee" id="ENSMUSG00000014786">
    <property type="expression patterns" value="Expressed in spermatocyte and 151 other cell types or tissues"/>
</dbReference>
<dbReference type="GO" id="GO:0032591">
    <property type="term" value="C:dendritic spine membrane"/>
    <property type="evidence" value="ECO:0007669"/>
    <property type="project" value="UniProtKB-SubCell"/>
</dbReference>
<dbReference type="GO" id="GO:0005925">
    <property type="term" value="C:focal adhesion"/>
    <property type="evidence" value="ECO:0000250"/>
    <property type="project" value="UniProtKB"/>
</dbReference>
<dbReference type="GO" id="GO:0044309">
    <property type="term" value="C:neuron spine"/>
    <property type="evidence" value="ECO:0000250"/>
    <property type="project" value="UniProtKB"/>
</dbReference>
<dbReference type="GO" id="GO:0005886">
    <property type="term" value="C:plasma membrane"/>
    <property type="evidence" value="ECO:0000250"/>
    <property type="project" value="UniProtKB"/>
</dbReference>
<dbReference type="GO" id="GO:0045211">
    <property type="term" value="C:postsynaptic membrane"/>
    <property type="evidence" value="ECO:0007669"/>
    <property type="project" value="UniProtKB-KW"/>
</dbReference>
<dbReference type="GO" id="GO:0055038">
    <property type="term" value="C:recycling endosome membrane"/>
    <property type="evidence" value="ECO:0000250"/>
    <property type="project" value="UniProtKB"/>
</dbReference>
<dbReference type="GO" id="GO:0045202">
    <property type="term" value="C:synapse"/>
    <property type="evidence" value="ECO:0000250"/>
    <property type="project" value="UniProtKB"/>
</dbReference>
<dbReference type="GO" id="GO:1990763">
    <property type="term" value="F:arrestin family protein binding"/>
    <property type="evidence" value="ECO:0007669"/>
    <property type="project" value="Ensembl"/>
</dbReference>
<dbReference type="GO" id="GO:0015385">
    <property type="term" value="F:sodium:proton antiporter activity"/>
    <property type="evidence" value="ECO:0000250"/>
    <property type="project" value="UniProtKB"/>
</dbReference>
<dbReference type="GO" id="GO:0051453">
    <property type="term" value="P:regulation of intracellular pH"/>
    <property type="evidence" value="ECO:0000250"/>
    <property type="project" value="UniProtKB"/>
</dbReference>
<dbReference type="Gene3D" id="6.10.140.1330">
    <property type="match status" value="1"/>
</dbReference>
<dbReference type="InterPro" id="IPR018422">
    <property type="entry name" value="Cation/H_exchanger_CPA1"/>
</dbReference>
<dbReference type="InterPro" id="IPR006153">
    <property type="entry name" value="Cation/H_exchanger_TM"/>
</dbReference>
<dbReference type="InterPro" id="IPR018410">
    <property type="entry name" value="Na/H_exchanger_3/5"/>
</dbReference>
<dbReference type="InterPro" id="IPR004709">
    <property type="entry name" value="NaH_exchanger"/>
</dbReference>
<dbReference type="NCBIfam" id="TIGR00840">
    <property type="entry name" value="b_cpa1"/>
    <property type="match status" value="1"/>
</dbReference>
<dbReference type="PANTHER" id="PTHR10110">
    <property type="entry name" value="SODIUM/HYDROGEN EXCHANGER"/>
    <property type="match status" value="1"/>
</dbReference>
<dbReference type="PANTHER" id="PTHR10110:SF56">
    <property type="entry name" value="SODIUM_HYDROGEN EXCHANGER 5"/>
    <property type="match status" value="1"/>
</dbReference>
<dbReference type="Pfam" id="PF00999">
    <property type="entry name" value="Na_H_Exchanger"/>
    <property type="match status" value="1"/>
</dbReference>
<dbReference type="PRINTS" id="PR01084">
    <property type="entry name" value="NAHEXCHNGR"/>
</dbReference>
<dbReference type="PRINTS" id="PR01087">
    <property type="entry name" value="NAHEXCHNGR3"/>
</dbReference>
<reference key="1">
    <citation type="journal article" date="2009" name="PLoS Biol.">
        <title>Lineage-specific biology revealed by a finished genome assembly of the mouse.</title>
        <authorList>
            <person name="Church D.M."/>
            <person name="Goodstadt L."/>
            <person name="Hillier L.W."/>
            <person name="Zody M.C."/>
            <person name="Goldstein S."/>
            <person name="She X."/>
            <person name="Bult C.J."/>
            <person name="Agarwala R."/>
            <person name="Cherry J.L."/>
            <person name="DiCuccio M."/>
            <person name="Hlavina W."/>
            <person name="Kapustin Y."/>
            <person name="Meric P."/>
            <person name="Maglott D."/>
            <person name="Birtle Z."/>
            <person name="Marques A.C."/>
            <person name="Graves T."/>
            <person name="Zhou S."/>
            <person name="Teague B."/>
            <person name="Potamousis K."/>
            <person name="Churas C."/>
            <person name="Place M."/>
            <person name="Herschleb J."/>
            <person name="Runnheim R."/>
            <person name="Forrest D."/>
            <person name="Amos-Landgraf J."/>
            <person name="Schwartz D.C."/>
            <person name="Cheng Z."/>
            <person name="Lindblad-Toh K."/>
            <person name="Eichler E.E."/>
            <person name="Ponting C.P."/>
        </authorList>
    </citation>
    <scope>NUCLEOTIDE SEQUENCE [LARGE SCALE GENOMIC DNA]</scope>
    <source>
        <strain>C57BL/6J</strain>
    </source>
</reference>
<reference key="2">
    <citation type="journal article" date="2004" name="Genome Res.">
        <title>The status, quality, and expansion of the NIH full-length cDNA project: the Mammalian Gene Collection (MGC).</title>
        <authorList>
            <consortium name="The MGC Project Team"/>
        </authorList>
    </citation>
    <scope>NUCLEOTIDE SEQUENCE [LARGE SCALE MRNA]</scope>
    <source>
        <tissue>Brain</tissue>
    </source>
</reference>
<reference key="3">
    <citation type="journal article" date="2011" name="Mol. Biol. Cell">
        <title>Regulation of dendritic spine growth through activity-dependent recruitment of the brain-enriched Na+/H+ exchanger NHE5.</title>
        <authorList>
            <person name="Diering G.H."/>
            <person name="Mills F."/>
            <person name="Bamji S.X."/>
            <person name="Numata M."/>
        </authorList>
    </citation>
    <scope>TISSUE SPECIFICITY</scope>
</reference>
<reference key="4">
    <citation type="journal article" date="2017" name="Am. J. Med. Genet. B Neuropsychiatr. Genet.">
        <title>Nhe5 deficiency enhances learning and memory via upregulating Bdnf/TrkB signaling in mice.</title>
        <authorList>
            <person name="Chen X."/>
            <person name="Wang X."/>
            <person name="Tang L."/>
            <person name="Wang J."/>
            <person name="Shen C."/>
            <person name="Liu J."/>
            <person name="Lu S."/>
            <person name="Zhang H."/>
            <person name="Kuang Y."/>
            <person name="Fei J."/>
            <person name="Wang Z."/>
        </authorList>
    </citation>
    <scope>DISRUPTION PHENOTYPE</scope>
    <scope>TISSUE SPECIFICITY</scope>
</reference>
<sequence length="898" mass="99009">MLSAALLLLPGLPLAGAGATEEPTQESGPLGEPPPGLALFRWQWHEVEAPYLVALWILVASLAKIVFHLSRKVTSLVPESCLLILLGLVLGGIVLAVAKKAEYQLEPGTFFLFLLPPIVLDSGYFMPSRLFFDNLGAILTYAVVGTLWNAFTTGVALWGLQQAGLVAPRVQAGLLDFLLFGSLISAVDPVAVLAVFEEVHVNQTLFIIIFGESLLNDAVTVVLYKVCNSFVEMGSANVQATDYLKGVASLFVVSLGGAAVGLVFAFLLALTTRFTKRVRIIEPLLVFLLAYAAYLTAEMASLSAILAVTMCGLGCKKYVEANISHKSRTAVKYTMKTLASCAETVIFMLLGISAVDSSKWAWDSGLVLGTLFFILFFRALGVVLQTWALNQFRLVPLDKIDQVVMSYGGLRGAVAFALVILLDRTKVPAKDYFVATTIVVVFFTVIVQGLTIKPLVKWLRVKRSDYHKPTLNQELHEHTFDHILAAVEDVVGHHGYHYWRDRWEQFDKKYLSQLLMRRSAYRIRDQIWDVYYRLNIRDAISFVDQGGHVLSSTGLTLPSMPSRNSVAETSVTNLLRESGSGACLDLQVIDTVRSGRDREDAVMHHLLCGGLYKPRRRYKASCGRHFISEDAQERQDKEIFQQNMKRRLESFKSTKHNICFTKSKPRPRKTSHKKKDGVANPEATNGKPPRDLGFQDTAAVILTVESEEEEESDSSETEKEDDEGIIFVARATSEVLQEGKVSGSLEVCPSPRIIPPSPTCAEKELPWKSGQGDLAVYVSSETTKIVPVDMQTGWNQSISSLESLASPPCTQPPTLTRLPPHPLVTEEPQVPIDLSSDPRSSFAFPPSLAKAGRSRSESSADIPQQELQPLMGHKDHTHLSPGTANSHWCIQFNRGGRL</sequence>
<feature type="chain" id="PRO_5015087168" description="Sodium/hydrogen exchanger 5" evidence="2">
    <location>
        <begin position="1"/>
        <end position="898"/>
    </location>
</feature>
<feature type="topological domain" description="Cytoplasmic" evidence="7">
    <location>
        <begin position="1"/>
        <end position="48"/>
    </location>
</feature>
<feature type="transmembrane region" description="Helical; Name=1" evidence="2">
    <location>
        <begin position="49"/>
        <end position="69"/>
    </location>
</feature>
<feature type="topological domain" description="Extracellular" evidence="7">
    <location>
        <begin position="70"/>
        <end position="76"/>
    </location>
</feature>
<feature type="transmembrane region" description="Helical; Name=2" evidence="2">
    <location>
        <begin position="77"/>
        <end position="97"/>
    </location>
</feature>
<feature type="topological domain" description="Cytoplasmic" evidence="7">
    <location>
        <begin position="98"/>
        <end position="106"/>
    </location>
</feature>
<feature type="transmembrane region" description="Helical; Name=3" evidence="2">
    <location>
        <begin position="107"/>
        <end position="127"/>
    </location>
</feature>
<feature type="topological domain" description="Extracellular" evidence="7">
    <location>
        <begin position="128"/>
        <end position="137"/>
    </location>
</feature>
<feature type="transmembrane region" description="Helical; Name=4" evidence="2">
    <location>
        <begin position="138"/>
        <end position="158"/>
    </location>
</feature>
<feature type="topological domain" description="Cytoplasmic" evidence="7">
    <location>
        <begin position="159"/>
        <end position="176"/>
    </location>
</feature>
<feature type="transmembrane region" description="Helical; Name=5" evidence="2">
    <location>
        <begin position="177"/>
        <end position="197"/>
    </location>
</feature>
<feature type="topological domain" description="Extracellular" evidence="7">
    <location>
        <begin position="198"/>
        <end position="203"/>
    </location>
</feature>
<feature type="transmembrane region" description="Helical; Name=6" evidence="2">
    <location>
        <begin position="204"/>
        <end position="224"/>
    </location>
</feature>
<feature type="topological domain" description="Cytoplasmic" evidence="7">
    <location>
        <begin position="225"/>
        <end position="249"/>
    </location>
</feature>
<feature type="transmembrane region" description="Helical; Name=7" evidence="2">
    <location>
        <begin position="250"/>
        <end position="270"/>
    </location>
</feature>
<feature type="topological domain" description="Extracellular" evidence="7">
    <location>
        <begin position="271"/>
        <end position="279"/>
    </location>
</feature>
<feature type="transmembrane region" description="Helical; Name=8" evidence="2">
    <location>
        <begin position="280"/>
        <end position="300"/>
    </location>
</feature>
<feature type="topological domain" description="Cytoplasmic" evidence="7">
    <location>
        <begin position="301"/>
        <end position="334"/>
    </location>
</feature>
<feature type="transmembrane region" description="Helical; Name=9" evidence="2">
    <location>
        <begin position="335"/>
        <end position="355"/>
    </location>
</feature>
<feature type="topological domain" description="Extracellular" evidence="7">
    <location>
        <begin position="356"/>
        <end position="363"/>
    </location>
</feature>
<feature type="transmembrane region" description="Helical; Name=10" evidence="2">
    <location>
        <begin position="364"/>
        <end position="384"/>
    </location>
</feature>
<feature type="topological domain" description="Cytoplasmic" evidence="7">
    <location>
        <begin position="385"/>
        <end position="401"/>
    </location>
</feature>
<feature type="transmembrane region" description="Helical; Name=11" evidence="2">
    <location>
        <begin position="402"/>
        <end position="422"/>
    </location>
</feature>
<feature type="topological domain" description="Extracellular" evidence="7">
    <location>
        <begin position="423"/>
        <end position="431"/>
    </location>
</feature>
<feature type="transmembrane region" description="Helical; Name=12" evidence="2">
    <location>
        <begin position="432"/>
        <end position="452"/>
    </location>
</feature>
<feature type="topological domain" description="Cytoplasmic" evidence="7">
    <location>
        <begin position="453"/>
        <end position="898"/>
    </location>
</feature>
<feature type="region of interest" description="Disordered" evidence="3">
    <location>
        <begin position="660"/>
        <end position="693"/>
    </location>
</feature>
<feature type="region of interest" description="Disordered" evidence="3">
    <location>
        <begin position="826"/>
        <end position="866"/>
    </location>
</feature>
<feature type="compositionally biased region" description="Basic residues" evidence="3">
    <location>
        <begin position="663"/>
        <end position="675"/>
    </location>
</feature>
<feature type="compositionally biased region" description="Polar residues" evidence="3">
    <location>
        <begin position="857"/>
        <end position="866"/>
    </location>
</feature>
<gene>
    <name type="primary">Slc9a5</name>
    <name evidence="6" type="synonym">Nhe5</name>
</gene>
<organism>
    <name type="scientific">Mus musculus</name>
    <name type="common">Mouse</name>
    <dbReference type="NCBI Taxonomy" id="10090"/>
    <lineage>
        <taxon>Eukaryota</taxon>
        <taxon>Metazoa</taxon>
        <taxon>Chordata</taxon>
        <taxon>Craniata</taxon>
        <taxon>Vertebrata</taxon>
        <taxon>Euteleostomi</taxon>
        <taxon>Mammalia</taxon>
        <taxon>Eutheria</taxon>
        <taxon>Euarchontoglires</taxon>
        <taxon>Glires</taxon>
        <taxon>Rodentia</taxon>
        <taxon>Myomorpha</taxon>
        <taxon>Muroidea</taxon>
        <taxon>Muridae</taxon>
        <taxon>Murinae</taxon>
        <taxon>Mus</taxon>
        <taxon>Mus</taxon>
    </lineage>
</organism>
<evidence type="ECO:0000250" key="1">
    <source>
        <dbReference type="UniProtKB" id="Q14940"/>
    </source>
</evidence>
<evidence type="ECO:0000255" key="2"/>
<evidence type="ECO:0000256" key="3">
    <source>
        <dbReference type="SAM" id="MobiDB-lite"/>
    </source>
</evidence>
<evidence type="ECO:0000269" key="4">
    <source>
    </source>
</evidence>
<evidence type="ECO:0000269" key="5">
    <source>
    </source>
</evidence>
<evidence type="ECO:0000303" key="6">
    <source>
    </source>
</evidence>
<evidence type="ECO:0000305" key="7"/>
<comment type="function">
    <text evidence="1">Plasma membrane Na(+)/H(+) antiporter. Mediates the electroneutral exchange of intracellular H(+) ions for extracellular Na(+) in 1:1 stoichiometry. Responsible for regulating intracellular pH homeostasis, in particular in neural tissues. Acts as a negative regulator of dendritic spine growth. Plays a role in postsynaptic remodeling and signaling. Can also contribute to organellar pH regulation, with consequences for receptor tyrosine kinase trafficking.</text>
</comment>
<comment type="catalytic activity">
    <reaction evidence="1">
        <text>Na(+)(in) + H(+)(out) = Na(+)(out) + H(+)(in)</text>
        <dbReference type="Rhea" id="RHEA:29419"/>
        <dbReference type="ChEBI" id="CHEBI:15378"/>
        <dbReference type="ChEBI" id="CHEBI:29101"/>
    </reaction>
    <physiologicalReaction direction="right-to-left" evidence="1">
        <dbReference type="Rhea" id="RHEA:29421"/>
    </physiologicalReaction>
</comment>
<comment type="subunit">
    <text evidence="1">Interacts with CHP1 and CHP2 (By similarity). Interacts with ARRB2; facilitates the endocytosis of SLC9A5 from the plasma membrane (By similarity). Interacts with RACK1; this interaction positively regulates SLC9A5 activity and promote SLC9A5 localization to focal adhesions (By similarity). Interacts with SCAMP2; this interaction regulates SLC9A5 cell-surface targeting and SLC9A5 activity (By similarity).</text>
</comment>
<comment type="subcellular location">
    <subcellularLocation>
        <location evidence="1">Cell membrane</location>
        <topology evidence="2">Multi-pass membrane protein</topology>
    </subcellularLocation>
    <subcellularLocation>
        <location evidence="1">Recycling endosome membrane</location>
        <topology evidence="2">Multi-pass membrane protein</topology>
    </subcellularLocation>
    <subcellularLocation>
        <location evidence="1">Cell projection</location>
        <location evidence="1">Dendritic spine membrane</location>
        <topology evidence="2">Multi-pass membrane protein</topology>
    </subcellularLocation>
    <subcellularLocation>
        <location evidence="1">Synaptic cell membrane</location>
        <topology>Multi-pass membrane protein</topology>
    </subcellularLocation>
    <subcellularLocation>
        <location evidence="1">Cell junction</location>
        <location evidence="1">Focal adhesion</location>
    </subcellularLocation>
    <text evidence="1">Cycles between recycling endosome and plasma membrane in response to diverse stimuli. Its internalization is clathrin- and beta-arrestin dependent and its plasma membrane insertion from the recycling endosomes requires phosphoinositide 3-kinase (PIK3CA) and SCAMP2.</text>
</comment>
<comment type="tissue specificity">
    <text evidence="4 5">Highest expression level is detected in brain (PubMed:28981195). Expressed in hippocampal neurons (at protein level) (PubMed:21551074).</text>
</comment>
<comment type="PTM">
    <text evidence="1">Phosphorylated by PRKAA2; promotes its accumulation at the cell surface. Phosphorylated by CSNK2A1 in a manner favoring its beta-arrestin binding and endocytosis.</text>
</comment>
<comment type="disruption phenotype">
    <text evidence="5">Deficient mice are born at normal Mendelian ratios without gross abnormalities in postnatal development. However, deficient mice display significant enhancement of learning and memory accompanied by an increase in the number of hippocampal excitatory synapses in the hippocampus.</text>
</comment>
<comment type="similarity">
    <text evidence="7">Belongs to the monovalent cation:proton antiporter 1 (CPA1) transporter (TC 2.A.36) family.</text>
</comment>
<name>SL9A5_MOUSE</name>
<keyword id="KW-0050">Antiport</keyword>
<keyword id="KW-0965">Cell junction</keyword>
<keyword id="KW-1003">Cell membrane</keyword>
<keyword id="KW-0966">Cell projection</keyword>
<keyword id="KW-0967">Endosome</keyword>
<keyword id="KW-0406">Ion transport</keyword>
<keyword id="KW-0472">Membrane</keyword>
<keyword id="KW-0628">Postsynaptic cell membrane</keyword>
<keyword id="KW-1185">Reference proteome</keyword>
<keyword id="KW-0915">Sodium</keyword>
<keyword id="KW-0739">Sodium transport</keyword>
<keyword id="KW-0770">Synapse</keyword>
<keyword id="KW-0812">Transmembrane</keyword>
<keyword id="KW-1133">Transmembrane helix</keyword>
<keyword id="KW-0813">Transport</keyword>
<proteinExistence type="evidence at protein level"/>
<protein>
    <recommendedName>
        <fullName>Sodium/hydrogen exchanger 5</fullName>
    </recommendedName>
    <alternativeName>
        <fullName>Na(+)/H(+) exchanger 5</fullName>
        <shortName>NHE-5</shortName>
    </alternativeName>
    <alternativeName>
        <fullName>Sodium/hydrogen exchanger</fullName>
    </alternativeName>
    <alternativeName>
        <fullName>Solute carrier family 9 member 5</fullName>
    </alternativeName>
</protein>
<accession>B2RXE2</accession>